<comment type="function">
    <text evidence="1">Catalyzes the oxidation of 5,10-methylenetetrahydrofolate to 5,10-methenyltetrahydrofolate and then the hydrolysis of 5,10-methenyltetrahydrofolate to 10-formyltetrahydrofolate.</text>
</comment>
<comment type="catalytic activity">
    <reaction evidence="1">
        <text>(6R)-5,10-methylene-5,6,7,8-tetrahydrofolate + NADP(+) = (6R)-5,10-methenyltetrahydrofolate + NADPH</text>
        <dbReference type="Rhea" id="RHEA:22812"/>
        <dbReference type="ChEBI" id="CHEBI:15636"/>
        <dbReference type="ChEBI" id="CHEBI:57455"/>
        <dbReference type="ChEBI" id="CHEBI:57783"/>
        <dbReference type="ChEBI" id="CHEBI:58349"/>
        <dbReference type="EC" id="1.5.1.5"/>
    </reaction>
</comment>
<comment type="catalytic activity">
    <reaction evidence="1">
        <text>(6R)-5,10-methenyltetrahydrofolate + H2O = (6R)-10-formyltetrahydrofolate + H(+)</text>
        <dbReference type="Rhea" id="RHEA:23700"/>
        <dbReference type="ChEBI" id="CHEBI:15377"/>
        <dbReference type="ChEBI" id="CHEBI:15378"/>
        <dbReference type="ChEBI" id="CHEBI:57455"/>
        <dbReference type="ChEBI" id="CHEBI:195366"/>
        <dbReference type="EC" id="3.5.4.9"/>
    </reaction>
</comment>
<comment type="pathway">
    <text evidence="1">One-carbon metabolism; tetrahydrofolate interconversion.</text>
</comment>
<comment type="subunit">
    <text evidence="1">Homodimer.</text>
</comment>
<comment type="similarity">
    <text evidence="1">Belongs to the tetrahydrofolate dehydrogenase/cyclohydrolase family.</text>
</comment>
<evidence type="ECO:0000255" key="1">
    <source>
        <dbReference type="HAMAP-Rule" id="MF_01576"/>
    </source>
</evidence>
<accession>B4TA94</accession>
<gene>
    <name evidence="1" type="primary">folD</name>
    <name type="ordered locus">SeHA_C0650</name>
</gene>
<organism>
    <name type="scientific">Salmonella heidelberg (strain SL476)</name>
    <dbReference type="NCBI Taxonomy" id="454169"/>
    <lineage>
        <taxon>Bacteria</taxon>
        <taxon>Pseudomonadati</taxon>
        <taxon>Pseudomonadota</taxon>
        <taxon>Gammaproteobacteria</taxon>
        <taxon>Enterobacterales</taxon>
        <taxon>Enterobacteriaceae</taxon>
        <taxon>Salmonella</taxon>
    </lineage>
</organism>
<protein>
    <recommendedName>
        <fullName evidence="1">Bifunctional protein FolD</fullName>
    </recommendedName>
    <domain>
        <recommendedName>
            <fullName evidence="1">Methylenetetrahydrofolate dehydrogenase</fullName>
            <ecNumber evidence="1">1.5.1.5</ecNumber>
        </recommendedName>
    </domain>
    <domain>
        <recommendedName>
            <fullName evidence="1">Methenyltetrahydrofolate cyclohydrolase</fullName>
            <ecNumber evidence="1">3.5.4.9</ecNumber>
        </recommendedName>
    </domain>
</protein>
<keyword id="KW-0028">Amino-acid biosynthesis</keyword>
<keyword id="KW-0368">Histidine biosynthesis</keyword>
<keyword id="KW-0378">Hydrolase</keyword>
<keyword id="KW-0486">Methionine biosynthesis</keyword>
<keyword id="KW-0511">Multifunctional enzyme</keyword>
<keyword id="KW-0521">NADP</keyword>
<keyword id="KW-0554">One-carbon metabolism</keyword>
<keyword id="KW-0560">Oxidoreductase</keyword>
<keyword id="KW-0658">Purine biosynthesis</keyword>
<feature type="chain" id="PRO_1000196799" description="Bifunctional protein FolD">
    <location>
        <begin position="1"/>
        <end position="288"/>
    </location>
</feature>
<feature type="binding site" evidence="1">
    <location>
        <begin position="166"/>
        <end position="168"/>
    </location>
    <ligand>
        <name>NADP(+)</name>
        <dbReference type="ChEBI" id="CHEBI:58349"/>
    </ligand>
</feature>
<feature type="binding site" evidence="1">
    <location>
        <position position="232"/>
    </location>
    <ligand>
        <name>NADP(+)</name>
        <dbReference type="ChEBI" id="CHEBI:58349"/>
    </ligand>
</feature>
<reference key="1">
    <citation type="journal article" date="2011" name="J. Bacteriol.">
        <title>Comparative genomics of 28 Salmonella enterica isolates: evidence for CRISPR-mediated adaptive sublineage evolution.</title>
        <authorList>
            <person name="Fricke W.F."/>
            <person name="Mammel M.K."/>
            <person name="McDermott P.F."/>
            <person name="Tartera C."/>
            <person name="White D.G."/>
            <person name="Leclerc J.E."/>
            <person name="Ravel J."/>
            <person name="Cebula T.A."/>
        </authorList>
    </citation>
    <scope>NUCLEOTIDE SEQUENCE [LARGE SCALE GENOMIC DNA]</scope>
    <source>
        <strain>SL476</strain>
    </source>
</reference>
<sequence>MAAKIIDGKTIAQQVRSEVAQKVQARVAAGLRAPGLAVVLVGSNPASQIYVASKRKACDEVGFVSRSYDLPETTSEAELLALIDTLNADNTIDGILVQLPLPAGIDNVKVLERIAPDKDVDGFHPYNVGRLCQRAPRLRPCTPRGIVTLLERYNIDTYGLNAVVIGASNIVGRPMSMELLLAGCTTTVTHRFTKDLRHHVEHADLLIVAVGKPGFIPGEWIKEGAIVIDVGINRLENGKVVGDVVFDEAAARASYITPVPGGVGPMTVATLIENTLQACIEYHDPQGK</sequence>
<dbReference type="EC" id="1.5.1.5" evidence="1"/>
<dbReference type="EC" id="3.5.4.9" evidence="1"/>
<dbReference type="EMBL" id="CP001120">
    <property type="protein sequence ID" value="ACF69751.1"/>
    <property type="molecule type" value="Genomic_DNA"/>
</dbReference>
<dbReference type="RefSeq" id="WP_000729165.1">
    <property type="nucleotide sequence ID" value="NC_011083.1"/>
</dbReference>
<dbReference type="SMR" id="B4TA94"/>
<dbReference type="KEGG" id="seh:SeHA_C0650"/>
<dbReference type="HOGENOM" id="CLU_034045_2_1_6"/>
<dbReference type="UniPathway" id="UPA00193"/>
<dbReference type="Proteomes" id="UP000001866">
    <property type="component" value="Chromosome"/>
</dbReference>
<dbReference type="GO" id="GO:0005829">
    <property type="term" value="C:cytosol"/>
    <property type="evidence" value="ECO:0007669"/>
    <property type="project" value="TreeGrafter"/>
</dbReference>
<dbReference type="GO" id="GO:0004477">
    <property type="term" value="F:methenyltetrahydrofolate cyclohydrolase activity"/>
    <property type="evidence" value="ECO:0007669"/>
    <property type="project" value="UniProtKB-UniRule"/>
</dbReference>
<dbReference type="GO" id="GO:0004488">
    <property type="term" value="F:methylenetetrahydrofolate dehydrogenase (NADP+) activity"/>
    <property type="evidence" value="ECO:0007669"/>
    <property type="project" value="UniProtKB-UniRule"/>
</dbReference>
<dbReference type="GO" id="GO:0000105">
    <property type="term" value="P:L-histidine biosynthetic process"/>
    <property type="evidence" value="ECO:0007669"/>
    <property type="project" value="UniProtKB-KW"/>
</dbReference>
<dbReference type="GO" id="GO:0009086">
    <property type="term" value="P:methionine biosynthetic process"/>
    <property type="evidence" value="ECO:0007669"/>
    <property type="project" value="UniProtKB-KW"/>
</dbReference>
<dbReference type="GO" id="GO:0006164">
    <property type="term" value="P:purine nucleotide biosynthetic process"/>
    <property type="evidence" value="ECO:0007669"/>
    <property type="project" value="UniProtKB-KW"/>
</dbReference>
<dbReference type="GO" id="GO:0035999">
    <property type="term" value="P:tetrahydrofolate interconversion"/>
    <property type="evidence" value="ECO:0007669"/>
    <property type="project" value="UniProtKB-UniRule"/>
</dbReference>
<dbReference type="CDD" id="cd01080">
    <property type="entry name" value="NAD_bind_m-THF_DH_Cyclohyd"/>
    <property type="match status" value="1"/>
</dbReference>
<dbReference type="FunFam" id="3.40.50.10860:FF:000001">
    <property type="entry name" value="Bifunctional protein FolD"/>
    <property type="match status" value="1"/>
</dbReference>
<dbReference type="FunFam" id="3.40.50.720:FF:000006">
    <property type="entry name" value="Bifunctional protein FolD"/>
    <property type="match status" value="1"/>
</dbReference>
<dbReference type="Gene3D" id="3.40.50.10860">
    <property type="entry name" value="Leucine Dehydrogenase, chain A, domain 1"/>
    <property type="match status" value="1"/>
</dbReference>
<dbReference type="Gene3D" id="3.40.50.720">
    <property type="entry name" value="NAD(P)-binding Rossmann-like Domain"/>
    <property type="match status" value="1"/>
</dbReference>
<dbReference type="HAMAP" id="MF_01576">
    <property type="entry name" value="THF_DHG_CYH"/>
    <property type="match status" value="1"/>
</dbReference>
<dbReference type="InterPro" id="IPR046346">
    <property type="entry name" value="Aminoacid_DH-like_N_sf"/>
</dbReference>
<dbReference type="InterPro" id="IPR036291">
    <property type="entry name" value="NAD(P)-bd_dom_sf"/>
</dbReference>
<dbReference type="InterPro" id="IPR000672">
    <property type="entry name" value="THF_DH/CycHdrlase"/>
</dbReference>
<dbReference type="InterPro" id="IPR020630">
    <property type="entry name" value="THF_DH/CycHdrlase_cat_dom"/>
</dbReference>
<dbReference type="InterPro" id="IPR020867">
    <property type="entry name" value="THF_DH/CycHdrlase_CS"/>
</dbReference>
<dbReference type="InterPro" id="IPR020631">
    <property type="entry name" value="THF_DH/CycHdrlase_NAD-bd_dom"/>
</dbReference>
<dbReference type="NCBIfam" id="NF008058">
    <property type="entry name" value="PRK10792.1"/>
    <property type="match status" value="1"/>
</dbReference>
<dbReference type="NCBIfam" id="NF010783">
    <property type="entry name" value="PRK14186.1"/>
    <property type="match status" value="1"/>
</dbReference>
<dbReference type="PANTHER" id="PTHR48099:SF5">
    <property type="entry name" value="C-1-TETRAHYDROFOLATE SYNTHASE, CYTOPLASMIC"/>
    <property type="match status" value="1"/>
</dbReference>
<dbReference type="PANTHER" id="PTHR48099">
    <property type="entry name" value="C-1-TETRAHYDROFOLATE SYNTHASE, CYTOPLASMIC-RELATED"/>
    <property type="match status" value="1"/>
</dbReference>
<dbReference type="Pfam" id="PF00763">
    <property type="entry name" value="THF_DHG_CYH"/>
    <property type="match status" value="1"/>
</dbReference>
<dbReference type="Pfam" id="PF02882">
    <property type="entry name" value="THF_DHG_CYH_C"/>
    <property type="match status" value="1"/>
</dbReference>
<dbReference type="PRINTS" id="PR00085">
    <property type="entry name" value="THFDHDRGNASE"/>
</dbReference>
<dbReference type="SUPFAM" id="SSF53223">
    <property type="entry name" value="Aminoacid dehydrogenase-like, N-terminal domain"/>
    <property type="match status" value="1"/>
</dbReference>
<dbReference type="SUPFAM" id="SSF51735">
    <property type="entry name" value="NAD(P)-binding Rossmann-fold domains"/>
    <property type="match status" value="1"/>
</dbReference>
<dbReference type="PROSITE" id="PS00766">
    <property type="entry name" value="THF_DHG_CYH_1"/>
    <property type="match status" value="1"/>
</dbReference>
<dbReference type="PROSITE" id="PS00767">
    <property type="entry name" value="THF_DHG_CYH_2"/>
    <property type="match status" value="1"/>
</dbReference>
<proteinExistence type="inferred from homology"/>
<name>FOLD_SALHS</name>